<feature type="peptide" id="PRO_0000043913" description="Paralytic peptide 1">
    <location>
        <begin position="1"/>
        <end position="23"/>
    </location>
</feature>
<feature type="disulfide bond" evidence="1">
    <location>
        <begin position="7"/>
        <end position="19"/>
    </location>
</feature>
<sequence>ENFAGGCTPGYQRTADGRCKATF</sequence>
<dbReference type="PIR" id="C39855">
    <property type="entry name" value="C39855"/>
</dbReference>
<dbReference type="GO" id="GO:0005615">
    <property type="term" value="C:extracellular space"/>
    <property type="evidence" value="ECO:0007669"/>
    <property type="project" value="UniProtKB-KW"/>
</dbReference>
<dbReference type="GO" id="GO:0005125">
    <property type="term" value="F:cytokine activity"/>
    <property type="evidence" value="ECO:0007669"/>
    <property type="project" value="UniProtKB-KW"/>
</dbReference>
<dbReference type="InterPro" id="IPR003463">
    <property type="entry name" value="GBP_PSP"/>
</dbReference>
<dbReference type="Pfam" id="PF02425">
    <property type="entry name" value="GBP_PSP"/>
    <property type="match status" value="1"/>
</dbReference>
<organism>
    <name type="scientific">Spodoptera exigua</name>
    <name type="common">Beet armyworm</name>
    <name type="synonym">Noctua fulgens</name>
    <dbReference type="NCBI Taxonomy" id="7107"/>
    <lineage>
        <taxon>Eukaryota</taxon>
        <taxon>Metazoa</taxon>
        <taxon>Ecdysozoa</taxon>
        <taxon>Arthropoda</taxon>
        <taxon>Hexapoda</taxon>
        <taxon>Insecta</taxon>
        <taxon>Pterygota</taxon>
        <taxon>Neoptera</taxon>
        <taxon>Endopterygota</taxon>
        <taxon>Lepidoptera</taxon>
        <taxon>Glossata</taxon>
        <taxon>Ditrysia</taxon>
        <taxon>Noctuoidea</taxon>
        <taxon>Noctuidae</taxon>
        <taxon>Amphipyrinae</taxon>
        <taxon>Spodoptera</taxon>
    </lineage>
</organism>
<reference key="1">
    <citation type="journal article" date="1991" name="J. Biol. Chem.">
        <title>Isolation and identification of paralytic peptides from hemolymph of the lepidopteran insects Manduca sexta, Spodoptera exigua, and Heliothis virescens.</title>
        <authorList>
            <person name="Skinner W.S."/>
            <person name="Dennis P.A."/>
            <person name="Li J.P."/>
            <person name="Summerfelt R.M."/>
            <person name="Carney R.L."/>
            <person name="Quistad G.B."/>
        </authorList>
    </citation>
    <scope>PROTEIN SEQUENCE</scope>
    <source>
        <tissue>Hemolymph</tissue>
    </source>
</reference>
<comment type="function">
    <text>Causes rapid, rigid paralysis when injected into Lepidopteran larvae. The physiological role may be to reduce hemolymph loss following injury and promote wound healing.</text>
</comment>
<comment type="tissue specificity">
    <text>Hemolymph.</text>
</comment>
<comment type="similarity">
    <text evidence="2">Belongs to the GBP/PSP1/paralytic peptide family.</text>
</comment>
<name>PAP1_SPOEX</name>
<keyword id="KW-0202">Cytokine</keyword>
<keyword id="KW-0903">Direct protein sequencing</keyword>
<keyword id="KW-1015">Disulfide bond</keyword>
<protein>
    <recommendedName>
        <fullName>Paralytic peptide 1</fullName>
    </recommendedName>
    <alternativeName>
        <fullName>Paralytic peptide I</fullName>
        <shortName>PP I</shortName>
    </alternativeName>
</protein>
<evidence type="ECO:0000250" key="1"/>
<evidence type="ECO:0000305" key="2"/>
<accession>P30255</accession>
<proteinExistence type="evidence at protein level"/>